<accession>C3LR59</accession>
<dbReference type="EMBL" id="CP001233">
    <property type="protein sequence ID" value="ACP04639.1"/>
    <property type="molecule type" value="Genomic_DNA"/>
</dbReference>
<dbReference type="RefSeq" id="WP_000028973.1">
    <property type="nucleotide sequence ID" value="NC_012578.1"/>
</dbReference>
<dbReference type="SMR" id="C3LR59"/>
<dbReference type="GeneID" id="69720938"/>
<dbReference type="KEGG" id="vcm:VCM66_0311"/>
<dbReference type="HOGENOM" id="CLU_086499_3_2_6"/>
<dbReference type="Proteomes" id="UP000001217">
    <property type="component" value="Chromosome I"/>
</dbReference>
<dbReference type="GO" id="GO:0022625">
    <property type="term" value="C:cytosolic large ribosomal subunit"/>
    <property type="evidence" value="ECO:0007669"/>
    <property type="project" value="TreeGrafter"/>
</dbReference>
<dbReference type="GO" id="GO:0003729">
    <property type="term" value="F:mRNA binding"/>
    <property type="evidence" value="ECO:0007669"/>
    <property type="project" value="TreeGrafter"/>
</dbReference>
<dbReference type="GO" id="GO:0003735">
    <property type="term" value="F:structural constituent of ribosome"/>
    <property type="evidence" value="ECO:0007669"/>
    <property type="project" value="InterPro"/>
</dbReference>
<dbReference type="GO" id="GO:0006412">
    <property type="term" value="P:translation"/>
    <property type="evidence" value="ECO:0007669"/>
    <property type="project" value="UniProtKB-UniRule"/>
</dbReference>
<dbReference type="CDD" id="cd00387">
    <property type="entry name" value="Ribosomal_L7_L12"/>
    <property type="match status" value="1"/>
</dbReference>
<dbReference type="FunFam" id="1.20.5.710:FF:000001">
    <property type="entry name" value="50S ribosomal protein L7/L12"/>
    <property type="match status" value="1"/>
</dbReference>
<dbReference type="FunFam" id="3.30.1390.10:FF:000001">
    <property type="entry name" value="50S ribosomal protein L7/L12"/>
    <property type="match status" value="1"/>
</dbReference>
<dbReference type="Gene3D" id="3.30.1390.10">
    <property type="match status" value="1"/>
</dbReference>
<dbReference type="Gene3D" id="1.20.5.710">
    <property type="entry name" value="Single helix bin"/>
    <property type="match status" value="1"/>
</dbReference>
<dbReference type="HAMAP" id="MF_00368">
    <property type="entry name" value="Ribosomal_bL12"/>
    <property type="match status" value="1"/>
</dbReference>
<dbReference type="InterPro" id="IPR000206">
    <property type="entry name" value="Ribosomal_bL12"/>
</dbReference>
<dbReference type="InterPro" id="IPR013823">
    <property type="entry name" value="Ribosomal_bL12_C"/>
</dbReference>
<dbReference type="InterPro" id="IPR014719">
    <property type="entry name" value="Ribosomal_bL12_C/ClpS-like"/>
</dbReference>
<dbReference type="InterPro" id="IPR008932">
    <property type="entry name" value="Ribosomal_bL12_oligo"/>
</dbReference>
<dbReference type="InterPro" id="IPR036235">
    <property type="entry name" value="Ribosomal_bL12_oligo_N_sf"/>
</dbReference>
<dbReference type="NCBIfam" id="TIGR00855">
    <property type="entry name" value="L12"/>
    <property type="match status" value="1"/>
</dbReference>
<dbReference type="PANTHER" id="PTHR45987">
    <property type="entry name" value="39S RIBOSOMAL PROTEIN L12"/>
    <property type="match status" value="1"/>
</dbReference>
<dbReference type="PANTHER" id="PTHR45987:SF4">
    <property type="entry name" value="LARGE RIBOSOMAL SUBUNIT PROTEIN BL12M"/>
    <property type="match status" value="1"/>
</dbReference>
<dbReference type="Pfam" id="PF00542">
    <property type="entry name" value="Ribosomal_L12"/>
    <property type="match status" value="1"/>
</dbReference>
<dbReference type="Pfam" id="PF16320">
    <property type="entry name" value="Ribosomal_L12_N"/>
    <property type="match status" value="1"/>
</dbReference>
<dbReference type="SUPFAM" id="SSF54736">
    <property type="entry name" value="ClpS-like"/>
    <property type="match status" value="1"/>
</dbReference>
<dbReference type="SUPFAM" id="SSF48300">
    <property type="entry name" value="Ribosomal protein L7/12, oligomerisation (N-terminal) domain"/>
    <property type="match status" value="1"/>
</dbReference>
<gene>
    <name evidence="1" type="primary">rplL</name>
    <name type="ordered locus">VCM66_0311</name>
</gene>
<protein>
    <recommendedName>
        <fullName evidence="1">Large ribosomal subunit protein bL12</fullName>
    </recommendedName>
    <alternativeName>
        <fullName evidence="2">50S ribosomal protein L7/L12</fullName>
    </alternativeName>
</protein>
<feature type="chain" id="PRO_1000195825" description="Large ribosomal subunit protein bL12">
    <location>
        <begin position="1"/>
        <end position="121"/>
    </location>
</feature>
<keyword id="KW-0687">Ribonucleoprotein</keyword>
<keyword id="KW-0689">Ribosomal protein</keyword>
<proteinExistence type="inferred from homology"/>
<name>RL7_VIBCM</name>
<comment type="function">
    <text evidence="1">Forms part of the ribosomal stalk which helps the ribosome interact with GTP-bound translation factors. Is thus essential for accurate translation.</text>
</comment>
<comment type="subunit">
    <text evidence="1">Homodimer. Part of the ribosomal stalk of the 50S ribosomal subunit. Forms a multimeric L10(L12)X complex, where L10 forms an elongated spine to which 2 to 4 L12 dimers bind in a sequential fashion. Binds GTP-bound translation factors.</text>
</comment>
<comment type="similarity">
    <text evidence="1">Belongs to the bacterial ribosomal protein bL12 family.</text>
</comment>
<organism>
    <name type="scientific">Vibrio cholerae serotype O1 (strain M66-2)</name>
    <dbReference type="NCBI Taxonomy" id="579112"/>
    <lineage>
        <taxon>Bacteria</taxon>
        <taxon>Pseudomonadati</taxon>
        <taxon>Pseudomonadota</taxon>
        <taxon>Gammaproteobacteria</taxon>
        <taxon>Vibrionales</taxon>
        <taxon>Vibrionaceae</taxon>
        <taxon>Vibrio</taxon>
    </lineage>
</organism>
<reference key="1">
    <citation type="journal article" date="2008" name="PLoS ONE">
        <title>A recalibrated molecular clock and independent origins for the cholera pandemic clones.</title>
        <authorList>
            <person name="Feng L."/>
            <person name="Reeves P.R."/>
            <person name="Lan R."/>
            <person name="Ren Y."/>
            <person name="Gao C."/>
            <person name="Zhou Z."/>
            <person name="Ren Y."/>
            <person name="Cheng J."/>
            <person name="Wang W."/>
            <person name="Wang J."/>
            <person name="Qian W."/>
            <person name="Li D."/>
            <person name="Wang L."/>
        </authorList>
    </citation>
    <scope>NUCLEOTIDE SEQUENCE [LARGE SCALE GENOMIC DNA]</scope>
    <source>
        <strain>M66-2</strain>
    </source>
</reference>
<sequence length="121" mass="12252">MSITNEQILDAIAEMSVMQVVELISAMEEKFGVSAAAAVVSGPAAAAAVEEQTEFNVILAAAGANKVAVIKAVRGATGLGLKEAKALVDGAPASVKEAVSKEEAEALKKELEEAGATVEVK</sequence>
<evidence type="ECO:0000255" key="1">
    <source>
        <dbReference type="HAMAP-Rule" id="MF_00368"/>
    </source>
</evidence>
<evidence type="ECO:0000305" key="2"/>